<gene>
    <name evidence="1" type="primary">ttcA</name>
    <name type="ordered locus">Rsph17025_2871</name>
</gene>
<feature type="chain" id="PRO_0000348819" description="tRNA-cytidine(32) 2-sulfurtransferase">
    <location>
        <begin position="1"/>
        <end position="292"/>
    </location>
</feature>
<feature type="short sequence motif" description="PP-loop motif" evidence="1">
    <location>
        <begin position="54"/>
        <end position="59"/>
    </location>
</feature>
<feature type="binding site" evidence="1">
    <location>
        <position position="129"/>
    </location>
    <ligand>
        <name>[4Fe-4S] cluster</name>
        <dbReference type="ChEBI" id="CHEBI:49883"/>
    </ligand>
</feature>
<feature type="binding site" evidence="1">
    <location>
        <position position="132"/>
    </location>
    <ligand>
        <name>[4Fe-4S] cluster</name>
        <dbReference type="ChEBI" id="CHEBI:49883"/>
    </ligand>
</feature>
<feature type="binding site" evidence="1">
    <location>
        <position position="220"/>
    </location>
    <ligand>
        <name>[4Fe-4S] cluster</name>
        <dbReference type="ChEBI" id="CHEBI:49883"/>
    </ligand>
</feature>
<name>TTCA_CERS5</name>
<comment type="function">
    <text evidence="1">Catalyzes the ATP-dependent 2-thiolation of cytidine in position 32 of tRNA, to form 2-thiocytidine (s(2)C32). The sulfur atoms are provided by the cysteine/cysteine desulfurase (IscS) system.</text>
</comment>
<comment type="catalytic activity">
    <reaction evidence="1">
        <text>cytidine(32) in tRNA + S-sulfanyl-L-cysteinyl-[cysteine desulfurase] + AH2 + ATP = 2-thiocytidine(32) in tRNA + L-cysteinyl-[cysteine desulfurase] + A + AMP + diphosphate + H(+)</text>
        <dbReference type="Rhea" id="RHEA:57048"/>
        <dbReference type="Rhea" id="RHEA-COMP:10288"/>
        <dbReference type="Rhea" id="RHEA-COMP:12157"/>
        <dbReference type="Rhea" id="RHEA-COMP:12158"/>
        <dbReference type="Rhea" id="RHEA-COMP:14821"/>
        <dbReference type="ChEBI" id="CHEBI:13193"/>
        <dbReference type="ChEBI" id="CHEBI:15378"/>
        <dbReference type="ChEBI" id="CHEBI:17499"/>
        <dbReference type="ChEBI" id="CHEBI:29950"/>
        <dbReference type="ChEBI" id="CHEBI:30616"/>
        <dbReference type="ChEBI" id="CHEBI:33019"/>
        <dbReference type="ChEBI" id="CHEBI:61963"/>
        <dbReference type="ChEBI" id="CHEBI:82748"/>
        <dbReference type="ChEBI" id="CHEBI:141453"/>
        <dbReference type="ChEBI" id="CHEBI:456215"/>
    </reaction>
    <physiologicalReaction direction="left-to-right" evidence="1">
        <dbReference type="Rhea" id="RHEA:57049"/>
    </physiologicalReaction>
</comment>
<comment type="cofactor">
    <cofactor evidence="1">
        <name>Mg(2+)</name>
        <dbReference type="ChEBI" id="CHEBI:18420"/>
    </cofactor>
</comment>
<comment type="cofactor">
    <cofactor evidence="1">
        <name>[4Fe-4S] cluster</name>
        <dbReference type="ChEBI" id="CHEBI:49883"/>
    </cofactor>
    <text evidence="1">Binds 1 [4Fe-4S] cluster per subunit. The cluster is chelated by three Cys residues, the fourth Fe has a free coordination site that may bind a sulfur atom transferred from the persulfide of IscS.</text>
</comment>
<comment type="pathway">
    <text evidence="1">tRNA modification.</text>
</comment>
<comment type="subunit">
    <text evidence="1">Homodimer.</text>
</comment>
<comment type="subcellular location">
    <subcellularLocation>
        <location evidence="1">Cytoplasm</location>
    </subcellularLocation>
</comment>
<comment type="miscellaneous">
    <text evidence="1">The thiolation reaction likely consists of two steps: a first activation step by ATP to form an adenylated intermediate of the target base of tRNA, and a second nucleophilic substitution step of the sulfur (S) atom supplied by the hydrosulfide attached to the Fe-S cluster.</text>
</comment>
<comment type="similarity">
    <text evidence="1">Belongs to the TtcA family.</text>
</comment>
<sequence>MTDELDDIHPILQGAPQTTEFRKLRKRIVRNVREALDQYGMVDGRDARWLVCLSGGKDSFTLLAALIELKWRGLLPVELLACNLDQGQPGFPATVLPEFLARMGIPHRIEYQDTYSIVVDKIPQGRTYCSLCSRLRRGNLYRIAREEGCSAIVLGHHRDDILETFFMNLFHGGRLATMPPKLVNEEGDLFVYRPLAFVAEADCERFARSMNYPIIPCDLCGSQDGLQRQQVKQILDGWEARSPGRRQVMFRALMNARPSHLLDPGLFDFAGLATGTASGRNGAEPPQLRGGD</sequence>
<reference key="1">
    <citation type="submission" date="2007-04" db="EMBL/GenBank/DDBJ databases">
        <title>Complete sequence of chromosome of Rhodobacter sphaeroides ATCC 17025.</title>
        <authorList>
            <consortium name="US DOE Joint Genome Institute"/>
            <person name="Copeland A."/>
            <person name="Lucas S."/>
            <person name="Lapidus A."/>
            <person name="Barry K."/>
            <person name="Detter J.C."/>
            <person name="Glavina del Rio T."/>
            <person name="Hammon N."/>
            <person name="Israni S."/>
            <person name="Dalin E."/>
            <person name="Tice H."/>
            <person name="Pitluck S."/>
            <person name="Chertkov O."/>
            <person name="Brettin T."/>
            <person name="Bruce D."/>
            <person name="Han C."/>
            <person name="Schmutz J."/>
            <person name="Larimer F."/>
            <person name="Land M."/>
            <person name="Hauser L."/>
            <person name="Kyrpides N."/>
            <person name="Kim E."/>
            <person name="Richardson P."/>
            <person name="Mackenzie C."/>
            <person name="Choudhary M."/>
            <person name="Donohue T.J."/>
            <person name="Kaplan S."/>
        </authorList>
    </citation>
    <scope>NUCLEOTIDE SEQUENCE [LARGE SCALE GENOMIC DNA]</scope>
    <source>
        <strain>ATCC 17025 / ATH 2.4.3</strain>
    </source>
</reference>
<accession>A4WWJ3</accession>
<proteinExistence type="inferred from homology"/>
<protein>
    <recommendedName>
        <fullName evidence="1">tRNA-cytidine(32) 2-sulfurtransferase</fullName>
        <ecNumber evidence="1">2.8.1.-</ecNumber>
    </recommendedName>
    <alternativeName>
        <fullName evidence="1">Two-thiocytidine biosynthesis protein A</fullName>
    </alternativeName>
    <alternativeName>
        <fullName evidence="1">tRNA 2-thiocytidine biosynthesis protein TtcA</fullName>
    </alternativeName>
</protein>
<dbReference type="EC" id="2.8.1.-" evidence="1"/>
<dbReference type="EMBL" id="CP000661">
    <property type="protein sequence ID" value="ABP71757.1"/>
    <property type="molecule type" value="Genomic_DNA"/>
</dbReference>
<dbReference type="SMR" id="A4WWJ3"/>
<dbReference type="STRING" id="349102.Rsph17025_2871"/>
<dbReference type="KEGG" id="rsq:Rsph17025_2871"/>
<dbReference type="eggNOG" id="COG0037">
    <property type="taxonomic scope" value="Bacteria"/>
</dbReference>
<dbReference type="HOGENOM" id="CLU_026481_0_0_5"/>
<dbReference type="BioCyc" id="RSPH349102:G1G8M-2965-MONOMER"/>
<dbReference type="GO" id="GO:0005737">
    <property type="term" value="C:cytoplasm"/>
    <property type="evidence" value="ECO:0007669"/>
    <property type="project" value="UniProtKB-SubCell"/>
</dbReference>
<dbReference type="GO" id="GO:0051539">
    <property type="term" value="F:4 iron, 4 sulfur cluster binding"/>
    <property type="evidence" value="ECO:0007669"/>
    <property type="project" value="UniProtKB-UniRule"/>
</dbReference>
<dbReference type="GO" id="GO:0005524">
    <property type="term" value="F:ATP binding"/>
    <property type="evidence" value="ECO:0007669"/>
    <property type="project" value="UniProtKB-UniRule"/>
</dbReference>
<dbReference type="GO" id="GO:0000287">
    <property type="term" value="F:magnesium ion binding"/>
    <property type="evidence" value="ECO:0007669"/>
    <property type="project" value="UniProtKB-UniRule"/>
</dbReference>
<dbReference type="GO" id="GO:0016783">
    <property type="term" value="F:sulfurtransferase activity"/>
    <property type="evidence" value="ECO:0007669"/>
    <property type="project" value="UniProtKB-UniRule"/>
</dbReference>
<dbReference type="GO" id="GO:0000049">
    <property type="term" value="F:tRNA binding"/>
    <property type="evidence" value="ECO:0007669"/>
    <property type="project" value="UniProtKB-KW"/>
</dbReference>
<dbReference type="GO" id="GO:0034227">
    <property type="term" value="P:tRNA thio-modification"/>
    <property type="evidence" value="ECO:0007669"/>
    <property type="project" value="UniProtKB-UniRule"/>
</dbReference>
<dbReference type="CDD" id="cd24138">
    <property type="entry name" value="TtcA-like"/>
    <property type="match status" value="1"/>
</dbReference>
<dbReference type="Gene3D" id="3.40.50.620">
    <property type="entry name" value="HUPs"/>
    <property type="match status" value="1"/>
</dbReference>
<dbReference type="HAMAP" id="MF_01850">
    <property type="entry name" value="TtcA"/>
    <property type="match status" value="1"/>
</dbReference>
<dbReference type="InterPro" id="IPR014729">
    <property type="entry name" value="Rossmann-like_a/b/a_fold"/>
</dbReference>
<dbReference type="InterPro" id="IPR011063">
    <property type="entry name" value="TilS/TtcA_N"/>
</dbReference>
<dbReference type="InterPro" id="IPR012089">
    <property type="entry name" value="tRNA_Cyd_32_2_STrfase"/>
</dbReference>
<dbReference type="InterPro" id="IPR035107">
    <property type="entry name" value="tRNA_thiolation_TtcA_Ctu1"/>
</dbReference>
<dbReference type="NCBIfam" id="NF007972">
    <property type="entry name" value="PRK10696.1"/>
    <property type="match status" value="1"/>
</dbReference>
<dbReference type="PANTHER" id="PTHR43686:SF1">
    <property type="entry name" value="AMINOTRAN_5 DOMAIN-CONTAINING PROTEIN"/>
    <property type="match status" value="1"/>
</dbReference>
<dbReference type="PANTHER" id="PTHR43686">
    <property type="entry name" value="SULFURTRANSFERASE-RELATED"/>
    <property type="match status" value="1"/>
</dbReference>
<dbReference type="Pfam" id="PF01171">
    <property type="entry name" value="ATP_bind_3"/>
    <property type="match status" value="1"/>
</dbReference>
<dbReference type="PIRSF" id="PIRSF004976">
    <property type="entry name" value="ATPase_YdaO"/>
    <property type="match status" value="1"/>
</dbReference>
<dbReference type="SUPFAM" id="SSF52402">
    <property type="entry name" value="Adenine nucleotide alpha hydrolases-like"/>
    <property type="match status" value="1"/>
</dbReference>
<organism>
    <name type="scientific">Cereibacter sphaeroides (strain ATCC 17025 / ATH 2.4.3)</name>
    <name type="common">Rhodobacter sphaeroides</name>
    <dbReference type="NCBI Taxonomy" id="349102"/>
    <lineage>
        <taxon>Bacteria</taxon>
        <taxon>Pseudomonadati</taxon>
        <taxon>Pseudomonadota</taxon>
        <taxon>Alphaproteobacteria</taxon>
        <taxon>Rhodobacterales</taxon>
        <taxon>Paracoccaceae</taxon>
        <taxon>Cereibacter</taxon>
    </lineage>
</organism>
<keyword id="KW-0004">4Fe-4S</keyword>
<keyword id="KW-0067">ATP-binding</keyword>
<keyword id="KW-0963">Cytoplasm</keyword>
<keyword id="KW-0408">Iron</keyword>
<keyword id="KW-0411">Iron-sulfur</keyword>
<keyword id="KW-0460">Magnesium</keyword>
<keyword id="KW-0479">Metal-binding</keyword>
<keyword id="KW-0547">Nucleotide-binding</keyword>
<keyword id="KW-0694">RNA-binding</keyword>
<keyword id="KW-0808">Transferase</keyword>
<keyword id="KW-0819">tRNA processing</keyword>
<keyword id="KW-0820">tRNA-binding</keyword>
<evidence type="ECO:0000255" key="1">
    <source>
        <dbReference type="HAMAP-Rule" id="MF_01850"/>
    </source>
</evidence>